<dbReference type="EC" id="1.4.7.1"/>
<dbReference type="EMBL" id="Z21705">
    <property type="protein sequence ID" value="CAA79809.1"/>
    <property type="molecule type" value="Genomic_DNA"/>
</dbReference>
<dbReference type="PIR" id="S39510">
    <property type="entry name" value="S39510"/>
</dbReference>
<dbReference type="SMR" id="Q06434"/>
<dbReference type="UniPathway" id="UPA00045"/>
<dbReference type="UniPathway" id="UPA00634">
    <property type="reaction ID" value="UER00691"/>
</dbReference>
<dbReference type="GO" id="GO:0009570">
    <property type="term" value="C:chloroplast stroma"/>
    <property type="evidence" value="ECO:0007669"/>
    <property type="project" value="UniProtKB-SubCell"/>
</dbReference>
<dbReference type="GO" id="GO:0051538">
    <property type="term" value="F:3 iron, 4 sulfur cluster binding"/>
    <property type="evidence" value="ECO:0007669"/>
    <property type="project" value="UniProtKB-KW"/>
</dbReference>
<dbReference type="GO" id="GO:0016041">
    <property type="term" value="F:glutamate synthase (ferredoxin) activity"/>
    <property type="evidence" value="ECO:0007669"/>
    <property type="project" value="UniProtKB-EC"/>
</dbReference>
<dbReference type="GO" id="GO:0046872">
    <property type="term" value="F:metal ion binding"/>
    <property type="evidence" value="ECO:0007669"/>
    <property type="project" value="UniProtKB-KW"/>
</dbReference>
<dbReference type="GO" id="GO:0019676">
    <property type="term" value="P:ammonia assimilation cycle"/>
    <property type="evidence" value="ECO:0007669"/>
    <property type="project" value="TreeGrafter"/>
</dbReference>
<dbReference type="GO" id="GO:0097054">
    <property type="term" value="P:L-glutamate biosynthetic process"/>
    <property type="evidence" value="ECO:0007669"/>
    <property type="project" value="UniProtKB-UniPathway"/>
</dbReference>
<dbReference type="CDD" id="cd00982">
    <property type="entry name" value="gltB_C"/>
    <property type="match status" value="1"/>
</dbReference>
<dbReference type="CDD" id="cd00713">
    <property type="entry name" value="GltS"/>
    <property type="match status" value="1"/>
</dbReference>
<dbReference type="CDD" id="cd02808">
    <property type="entry name" value="GltS_FMN"/>
    <property type="match status" value="1"/>
</dbReference>
<dbReference type="FunFam" id="3.20.20.70:FF:000084">
    <property type="entry name" value="Ferredoxin-dependent glutamate synthase, chloroplastic"/>
    <property type="match status" value="1"/>
</dbReference>
<dbReference type="FunFam" id="3.60.20.10:FF:000001">
    <property type="entry name" value="Glutamate synthase, large subunit"/>
    <property type="match status" value="1"/>
</dbReference>
<dbReference type="Gene3D" id="3.20.20.70">
    <property type="entry name" value="Aldolase class I"/>
    <property type="match status" value="2"/>
</dbReference>
<dbReference type="Gene3D" id="2.160.20.60">
    <property type="entry name" value="Glutamate synthase, alpha subunit, C-terminal domain"/>
    <property type="match status" value="1"/>
</dbReference>
<dbReference type="Gene3D" id="3.60.20.10">
    <property type="entry name" value="Glutamine Phosphoribosylpyrophosphate, subunit 1, domain 1"/>
    <property type="match status" value="1"/>
</dbReference>
<dbReference type="InterPro" id="IPR013785">
    <property type="entry name" value="Aldolase_TIM"/>
</dbReference>
<dbReference type="InterPro" id="IPR050711">
    <property type="entry name" value="ET-N_metabolism_enzyme"/>
</dbReference>
<dbReference type="InterPro" id="IPR017932">
    <property type="entry name" value="GATase_2_dom"/>
</dbReference>
<dbReference type="InterPro" id="IPR002489">
    <property type="entry name" value="Glu_synth_asu_C"/>
</dbReference>
<dbReference type="InterPro" id="IPR036485">
    <property type="entry name" value="Glu_synth_asu_C_sf"/>
</dbReference>
<dbReference type="InterPro" id="IPR006982">
    <property type="entry name" value="Glu_synth_centr_N"/>
</dbReference>
<dbReference type="InterPro" id="IPR002932">
    <property type="entry name" value="Glu_synthdom"/>
</dbReference>
<dbReference type="InterPro" id="IPR029055">
    <property type="entry name" value="Ntn_hydrolases_N"/>
</dbReference>
<dbReference type="NCBIfam" id="NF008730">
    <property type="entry name" value="PRK11750.1"/>
    <property type="match status" value="1"/>
</dbReference>
<dbReference type="PANTHER" id="PTHR11938">
    <property type="entry name" value="FAD NADPH DEHYDROGENASE/OXIDOREDUCTASE"/>
    <property type="match status" value="1"/>
</dbReference>
<dbReference type="PANTHER" id="PTHR11938:SF133">
    <property type="entry name" value="GLUTAMATE SYNTHASE (NADH)"/>
    <property type="match status" value="1"/>
</dbReference>
<dbReference type="Pfam" id="PF00310">
    <property type="entry name" value="GATase_2"/>
    <property type="match status" value="1"/>
</dbReference>
<dbReference type="Pfam" id="PF04898">
    <property type="entry name" value="Glu_syn_central"/>
    <property type="match status" value="1"/>
</dbReference>
<dbReference type="Pfam" id="PF01645">
    <property type="entry name" value="Glu_synthase"/>
    <property type="match status" value="1"/>
</dbReference>
<dbReference type="Pfam" id="PF01493">
    <property type="entry name" value="GXGXG"/>
    <property type="match status" value="1"/>
</dbReference>
<dbReference type="SUPFAM" id="SSF69336">
    <property type="entry name" value="Alpha subunit of glutamate synthase, C-terminal domain"/>
    <property type="match status" value="1"/>
</dbReference>
<dbReference type="SUPFAM" id="SSF51395">
    <property type="entry name" value="FMN-linked oxidoreductases"/>
    <property type="match status" value="1"/>
</dbReference>
<dbReference type="SUPFAM" id="SSF56235">
    <property type="entry name" value="N-terminal nucleophile aminohydrolases (Ntn hydrolases)"/>
    <property type="match status" value="1"/>
</dbReference>
<dbReference type="PROSITE" id="PS51278">
    <property type="entry name" value="GATASE_TYPE_2"/>
    <property type="match status" value="1"/>
</dbReference>
<reference key="1">
    <citation type="journal article" date="1993" name="Plant Mol. Biol.">
        <title>Glutamate synthase is plastid-encoded in a red alga: implications for the evolution of glutamate synthases.</title>
        <authorList>
            <person name="Valentin K.-U."/>
            <person name="Kostrzewa M."/>
            <person name="Zetsche K."/>
        </authorList>
    </citation>
    <scope>NUCLEOTIDE SEQUENCE [GENOMIC DNA]</scope>
</reference>
<geneLocation type="chloroplast"/>
<evidence type="ECO:0000250" key="1"/>
<evidence type="ECO:0000255" key="2">
    <source>
        <dbReference type="PROSITE-ProRule" id="PRU00609"/>
    </source>
</evidence>
<evidence type="ECO:0000305" key="3"/>
<protein>
    <recommendedName>
        <fullName>Ferredoxin-dependent glutamate synthase</fullName>
        <ecNumber>1.4.7.1</ecNumber>
    </recommendedName>
    <alternativeName>
        <fullName>Fd-GOGAT</fullName>
    </alternativeName>
</protein>
<gene>
    <name type="primary">gltB</name>
    <name type="synonym">glsF</name>
</gene>
<feature type="chain" id="PRO_0000170790" description="Ferredoxin-dependent glutamate synthase">
    <location>
        <begin position="1"/>
        <end position="1536"/>
    </location>
</feature>
<feature type="domain" description="Glutamine amidotransferase type-2" evidence="2">
    <location>
        <begin position="27"/>
        <end position="427"/>
    </location>
</feature>
<feature type="active site" description="For GATase activity" evidence="1">
    <location>
        <position position="27"/>
    </location>
</feature>
<feature type="binding site" evidence="1">
    <location>
        <begin position="1105"/>
        <end position="1162"/>
    </location>
    <ligand>
        <name>FMN</name>
        <dbReference type="ChEBI" id="CHEBI:58210"/>
    </ligand>
</feature>
<feature type="binding site" evidence="1">
    <location>
        <position position="1158"/>
    </location>
    <ligand>
        <name>[3Fe-4S] cluster</name>
        <dbReference type="ChEBI" id="CHEBI:21137"/>
    </ligand>
</feature>
<feature type="binding site" evidence="1">
    <location>
        <position position="1164"/>
    </location>
    <ligand>
        <name>[3Fe-4S] cluster</name>
        <dbReference type="ChEBI" id="CHEBI:21137"/>
    </ligand>
</feature>
<feature type="binding site" evidence="1">
    <location>
        <position position="1169"/>
    </location>
    <ligand>
        <name>[3Fe-4S] cluster</name>
        <dbReference type="ChEBI" id="CHEBI:21137"/>
    </ligand>
</feature>
<name>GLTB_ANTSP</name>
<sequence>MQVSKYFTHQLSQFSGYPSIVSERDACGVGFIANLNSKPSNKIVTEALNALSCMEHRGGCGADNISGDGAGVTIQIPWDIFISEGINFLPKLQSNQSILNYGVRMILRSSDDLDKIKKIFSWALDEYQLDLISWRNVPVDKSILGEESKFNQPLVVQCIVRSNNLIDYKLDKHLYLVRKKIEKLVSKLDINTNKQFYICSFSSKTIVYKGMLRSEFLVKYYNDLSNSLYVSNFAMYHRRFSTNTMPKWSLAQPMRFMAHNGEINTLLGNLNWNKSKESLLKSSIWSDYYDILSPITNLENSDSANLDSVLELFIHSGRTPQEALMILIPEAYKNQPALSLFPEITDFYEYYSILQEPWDGPALVVFTDGKFVGATLDRNGLRPARYTITDDGFISLSSETGVSNINSQNVVTKGRLGPGQMLCVDLSKNLVLDNWMIKQQISQKFPYKEWVNKYQSNLNLLEYLNDFTFDKVQMNRWHTAFGYTNEDVELVIEHMASSAKEPTFSMGDDTPLPILSEKPHLIYDYFKQRFAQVTNPAIDPLRESLVMSLITYLGPKGNILEPTAIMAKSIKLESPIINENELAQLNSFNLSVVTVPTFIDKHLSTQTFVDKILEICSQCDSYISQGIEILVLSDRIEILPVDKIFVSPLLIVGAVHHYLIKKQLRHKVSLVIDTGQCWTTHHFALLIGYGASAICPYLAFLTVRQWWHNSRTQKLMSTGKLSRLTIQESQDNYRSAIEKGLLKILSKMGISLLSSYHGAQIFEILGLGQDVVDLAFSGTVSRLNGMTLNELYEDSLKSYNLAFITEIPKKLPNLGYVQYRPSAEYHVNNPEMSKTLHKAVRNNDNILYSKYKSLLNDRRPTNLRDLLELKTDRQPISIDQVEDVNSVLMRFCTGGMSLGALSRETHETLAIRMNRIGGKSNSGEGGEDSTRFKSIQDLDTSGVSRTFSHLKGLKINDLASSAIKQIASGRFGVTPEYLVNAKQLEIKIAQGAKPGEGGQLPGKKVSPYIAELRNCKPGVTLISPPPHHDIYSIEDLAQLIFDLHQINPDAQVSVKLVASLGIGTIAAGVAKGNADIIQISGHDGGTGASPLSSIKHAGAPWDVGLAEVHTTLVENSLREKVILRVDGGLRTGKDIIIAALMGAEEFGFGTVAMIATGCVMARVCHTNNCPVGVATQRQDLRNRFPGIPSDVVNFFIFVAEEVREILAELGYKSLEELIGLNDLFKVKDIELSKTKNLNLNILFNSINMNRNLIPKLKHKTVHTNGNVLDDILLSKSNIINAINLQSNIVQDIEILNTDRCVGARISGLITKMYGRDNFNGNLQLNFVGSAGQSFGAFISKGIHLYLKGEANDYVGKGMNGGEIIICPPIEQKTSSSNQVILGNTCLYGATGGYLFANGQAGERFAVRNSNGYSVVEGVGDHACEYMTGGLIVVLGTFGRNIGAGMTGGIAYFLDEDNTLKNKLNTEIVKAQRLLTKESEEQLKNIMELYEIKTKSEKAKLILDNWSQYLAKFYQIVPPSEQIQHLLMLIFFFSKYC</sequence>
<comment type="catalytic activity">
    <reaction>
        <text>2 oxidized [2Fe-2S]-[ferredoxin] + 2 L-glutamate = L-glutamine + 2 reduced [2Fe-2S]-[ferredoxin] + 2-oxoglutarate + 2 H(+)</text>
        <dbReference type="Rhea" id="RHEA:12128"/>
        <dbReference type="Rhea" id="RHEA-COMP:10000"/>
        <dbReference type="Rhea" id="RHEA-COMP:10001"/>
        <dbReference type="ChEBI" id="CHEBI:15378"/>
        <dbReference type="ChEBI" id="CHEBI:16810"/>
        <dbReference type="ChEBI" id="CHEBI:29985"/>
        <dbReference type="ChEBI" id="CHEBI:33737"/>
        <dbReference type="ChEBI" id="CHEBI:33738"/>
        <dbReference type="ChEBI" id="CHEBI:58359"/>
        <dbReference type="EC" id="1.4.7.1"/>
    </reaction>
</comment>
<comment type="cofactor">
    <cofactor>
        <name>[3Fe-4S] cluster</name>
        <dbReference type="ChEBI" id="CHEBI:21137"/>
    </cofactor>
    <text>Binds 1 [3Fe-4S] cluster.</text>
</comment>
<comment type="cofactor">
    <cofactor>
        <name>FAD</name>
        <dbReference type="ChEBI" id="CHEBI:57692"/>
    </cofactor>
</comment>
<comment type="cofactor">
    <cofactor>
        <name>FMN</name>
        <dbReference type="ChEBI" id="CHEBI:58210"/>
    </cofactor>
</comment>
<comment type="pathway">
    <text>Amino-acid biosynthesis; L-glutamate biosynthesis via GLT pathway; L-glutamate from 2-oxoglutarate and L-glutamine (ferredoxin route): step 1/1.</text>
</comment>
<comment type="pathway">
    <text>Energy metabolism; nitrogen metabolism.</text>
</comment>
<comment type="subunit">
    <text>Monomer.</text>
</comment>
<comment type="subcellular location">
    <subcellularLocation>
        <location>Plastid</location>
        <location>Chloroplast stroma</location>
    </subcellularLocation>
</comment>
<comment type="similarity">
    <text evidence="3">Belongs to the glutamate synthase family.</text>
</comment>
<organism>
    <name type="scientific">Antithamnion sp.</name>
    <name type="common">Red alga</name>
    <dbReference type="NCBI Taxonomy" id="2767"/>
    <lineage>
        <taxon>Eukaryota</taxon>
        <taxon>Rhodophyta</taxon>
        <taxon>Florideophyceae</taxon>
        <taxon>Rhodymeniophycidae</taxon>
        <taxon>Ceramiales</taxon>
        <taxon>Ceramiaceae</taxon>
        <taxon>Antithamnion</taxon>
    </lineage>
</organism>
<accession>Q06434</accession>
<proteinExistence type="inferred from homology"/>
<keyword id="KW-0003">3Fe-4S</keyword>
<keyword id="KW-0028">Amino-acid biosynthesis</keyword>
<keyword id="KW-0150">Chloroplast</keyword>
<keyword id="KW-0274">FAD</keyword>
<keyword id="KW-0285">Flavoprotein</keyword>
<keyword id="KW-0288">FMN</keyword>
<keyword id="KW-0314">Glutamate biosynthesis</keyword>
<keyword id="KW-0315">Glutamine amidotransferase</keyword>
<keyword id="KW-0408">Iron</keyword>
<keyword id="KW-0411">Iron-sulfur</keyword>
<keyword id="KW-0479">Metal-binding</keyword>
<keyword id="KW-0560">Oxidoreductase</keyword>
<keyword id="KW-0934">Plastid</keyword>